<comment type="function">
    <text evidence="1">Catalyzes the hydrolysis of N-succinyl-L,L-diaminopimelic acid (SDAP), forming succinate and LL-2,6-diaminopimelate (DAP), an intermediate involved in the bacterial biosynthesis of lysine and meso-diaminopimelic acid, an essential component of bacterial cell walls.</text>
</comment>
<comment type="catalytic activity">
    <reaction evidence="1">
        <text>N-succinyl-(2S,6S)-2,6-diaminopimelate + H2O = (2S,6S)-2,6-diaminopimelate + succinate</text>
        <dbReference type="Rhea" id="RHEA:22608"/>
        <dbReference type="ChEBI" id="CHEBI:15377"/>
        <dbReference type="ChEBI" id="CHEBI:30031"/>
        <dbReference type="ChEBI" id="CHEBI:57609"/>
        <dbReference type="ChEBI" id="CHEBI:58087"/>
        <dbReference type="EC" id="3.5.1.18"/>
    </reaction>
</comment>
<comment type="cofactor">
    <cofactor evidence="1">
        <name>Zn(2+)</name>
        <dbReference type="ChEBI" id="CHEBI:29105"/>
    </cofactor>
    <cofactor evidence="1">
        <name>Co(2+)</name>
        <dbReference type="ChEBI" id="CHEBI:48828"/>
    </cofactor>
    <text evidence="1">Binds 2 Zn(2+) or Co(2+) ions per subunit.</text>
</comment>
<comment type="pathway">
    <text evidence="1">Amino-acid biosynthesis; L-lysine biosynthesis via DAP pathway; LL-2,6-diaminopimelate from (S)-tetrahydrodipicolinate (succinylase route): step 3/3.</text>
</comment>
<comment type="subunit">
    <text evidence="1">Homodimer.</text>
</comment>
<comment type="similarity">
    <text evidence="1">Belongs to the peptidase M20A family. DapE subfamily.</text>
</comment>
<feature type="chain" id="PRO_0000375652" description="Succinyl-diaminopimelate desuccinylase">
    <location>
        <begin position="1"/>
        <end position="376"/>
    </location>
</feature>
<feature type="active site" evidence="1">
    <location>
        <position position="69"/>
    </location>
</feature>
<feature type="active site" description="Proton acceptor" evidence="1">
    <location>
        <position position="134"/>
    </location>
</feature>
<feature type="binding site" evidence="1">
    <location>
        <position position="67"/>
    </location>
    <ligand>
        <name>Zn(2+)</name>
        <dbReference type="ChEBI" id="CHEBI:29105"/>
        <label>1</label>
    </ligand>
</feature>
<feature type="binding site" evidence="1">
    <location>
        <position position="100"/>
    </location>
    <ligand>
        <name>Zn(2+)</name>
        <dbReference type="ChEBI" id="CHEBI:29105"/>
        <label>1</label>
    </ligand>
</feature>
<feature type="binding site" evidence="1">
    <location>
        <position position="100"/>
    </location>
    <ligand>
        <name>Zn(2+)</name>
        <dbReference type="ChEBI" id="CHEBI:29105"/>
        <label>2</label>
    </ligand>
</feature>
<feature type="binding site" evidence="1">
    <location>
        <position position="135"/>
    </location>
    <ligand>
        <name>Zn(2+)</name>
        <dbReference type="ChEBI" id="CHEBI:29105"/>
        <label>2</label>
    </ligand>
</feature>
<feature type="binding site" evidence="1">
    <location>
        <position position="163"/>
    </location>
    <ligand>
        <name>Zn(2+)</name>
        <dbReference type="ChEBI" id="CHEBI:29105"/>
        <label>1</label>
    </ligand>
</feature>
<feature type="binding site" evidence="1">
    <location>
        <position position="349"/>
    </location>
    <ligand>
        <name>Zn(2+)</name>
        <dbReference type="ChEBI" id="CHEBI:29105"/>
        <label>2</label>
    </ligand>
</feature>
<keyword id="KW-0028">Amino-acid biosynthesis</keyword>
<keyword id="KW-0170">Cobalt</keyword>
<keyword id="KW-0220">Diaminopimelate biosynthesis</keyword>
<keyword id="KW-0378">Hydrolase</keyword>
<keyword id="KW-0457">Lysine biosynthesis</keyword>
<keyword id="KW-0479">Metal-binding</keyword>
<keyword id="KW-1185">Reference proteome</keyword>
<keyword id="KW-0862">Zinc</keyword>
<protein>
    <recommendedName>
        <fullName evidence="1">Succinyl-diaminopimelate desuccinylase</fullName>
        <shortName evidence="1">SDAP desuccinylase</shortName>
        <ecNumber evidence="1">3.5.1.18</ecNumber>
    </recommendedName>
    <alternativeName>
        <fullName evidence="1">N-succinyl-LL-2,6-diaminoheptanedioate amidohydrolase</fullName>
    </alternativeName>
</protein>
<dbReference type="EC" id="3.5.1.18" evidence="1"/>
<dbReference type="EMBL" id="CR954246">
    <property type="protein sequence ID" value="CAI86406.1"/>
    <property type="molecule type" value="Genomic_DNA"/>
</dbReference>
<dbReference type="SMR" id="Q3IL20"/>
<dbReference type="STRING" id="326442.PSHAa1331"/>
<dbReference type="KEGG" id="pha:PSHAa1331"/>
<dbReference type="PATRIC" id="fig|326442.8.peg.1286"/>
<dbReference type="eggNOG" id="COG0624">
    <property type="taxonomic scope" value="Bacteria"/>
</dbReference>
<dbReference type="HOGENOM" id="CLU_021802_4_0_6"/>
<dbReference type="BioCyc" id="PHAL326442:PSHA_RS06550-MONOMER"/>
<dbReference type="UniPathway" id="UPA00034">
    <property type="reaction ID" value="UER00021"/>
</dbReference>
<dbReference type="Proteomes" id="UP000006843">
    <property type="component" value="Chromosome I"/>
</dbReference>
<dbReference type="GO" id="GO:0008777">
    <property type="term" value="F:acetylornithine deacetylase activity"/>
    <property type="evidence" value="ECO:0007669"/>
    <property type="project" value="TreeGrafter"/>
</dbReference>
<dbReference type="GO" id="GO:0050897">
    <property type="term" value="F:cobalt ion binding"/>
    <property type="evidence" value="ECO:0007669"/>
    <property type="project" value="UniProtKB-UniRule"/>
</dbReference>
<dbReference type="GO" id="GO:0009014">
    <property type="term" value="F:succinyl-diaminopimelate desuccinylase activity"/>
    <property type="evidence" value="ECO:0007669"/>
    <property type="project" value="UniProtKB-UniRule"/>
</dbReference>
<dbReference type="GO" id="GO:0008270">
    <property type="term" value="F:zinc ion binding"/>
    <property type="evidence" value="ECO:0007669"/>
    <property type="project" value="UniProtKB-UniRule"/>
</dbReference>
<dbReference type="GO" id="GO:0019877">
    <property type="term" value="P:diaminopimelate biosynthetic process"/>
    <property type="evidence" value="ECO:0007669"/>
    <property type="project" value="UniProtKB-UniRule"/>
</dbReference>
<dbReference type="GO" id="GO:0006526">
    <property type="term" value="P:L-arginine biosynthetic process"/>
    <property type="evidence" value="ECO:0007669"/>
    <property type="project" value="TreeGrafter"/>
</dbReference>
<dbReference type="GO" id="GO:0009089">
    <property type="term" value="P:lysine biosynthetic process via diaminopimelate"/>
    <property type="evidence" value="ECO:0007669"/>
    <property type="project" value="UniProtKB-UniRule"/>
</dbReference>
<dbReference type="CDD" id="cd03891">
    <property type="entry name" value="M20_DapE_proteobac"/>
    <property type="match status" value="1"/>
</dbReference>
<dbReference type="FunFam" id="3.30.70.360:FF:000011">
    <property type="entry name" value="Succinyl-diaminopimelate desuccinylase"/>
    <property type="match status" value="1"/>
</dbReference>
<dbReference type="FunFam" id="3.40.630.10:FF:000005">
    <property type="entry name" value="Succinyl-diaminopimelate desuccinylase"/>
    <property type="match status" value="1"/>
</dbReference>
<dbReference type="Gene3D" id="3.40.630.10">
    <property type="entry name" value="Zn peptidases"/>
    <property type="match status" value="2"/>
</dbReference>
<dbReference type="HAMAP" id="MF_01690">
    <property type="entry name" value="DapE"/>
    <property type="match status" value="1"/>
</dbReference>
<dbReference type="InterPro" id="IPR001261">
    <property type="entry name" value="ArgE/DapE_CS"/>
</dbReference>
<dbReference type="InterPro" id="IPR036264">
    <property type="entry name" value="Bact_exopeptidase_dim_dom"/>
</dbReference>
<dbReference type="InterPro" id="IPR005941">
    <property type="entry name" value="DapE_proteobac"/>
</dbReference>
<dbReference type="InterPro" id="IPR002933">
    <property type="entry name" value="Peptidase_M20"/>
</dbReference>
<dbReference type="InterPro" id="IPR011650">
    <property type="entry name" value="Peptidase_M20_dimer"/>
</dbReference>
<dbReference type="InterPro" id="IPR050072">
    <property type="entry name" value="Peptidase_M20A"/>
</dbReference>
<dbReference type="NCBIfam" id="TIGR01246">
    <property type="entry name" value="dapE_proteo"/>
    <property type="match status" value="1"/>
</dbReference>
<dbReference type="NCBIfam" id="NF009557">
    <property type="entry name" value="PRK13009.1"/>
    <property type="match status" value="1"/>
</dbReference>
<dbReference type="PANTHER" id="PTHR43808">
    <property type="entry name" value="ACETYLORNITHINE DEACETYLASE"/>
    <property type="match status" value="1"/>
</dbReference>
<dbReference type="PANTHER" id="PTHR43808:SF31">
    <property type="entry name" value="N-ACETYL-L-CITRULLINE DEACETYLASE"/>
    <property type="match status" value="1"/>
</dbReference>
<dbReference type="Pfam" id="PF07687">
    <property type="entry name" value="M20_dimer"/>
    <property type="match status" value="1"/>
</dbReference>
<dbReference type="Pfam" id="PF01546">
    <property type="entry name" value="Peptidase_M20"/>
    <property type="match status" value="1"/>
</dbReference>
<dbReference type="SUPFAM" id="SSF55031">
    <property type="entry name" value="Bacterial exopeptidase dimerisation domain"/>
    <property type="match status" value="1"/>
</dbReference>
<dbReference type="SUPFAM" id="SSF53187">
    <property type="entry name" value="Zn-dependent exopeptidases"/>
    <property type="match status" value="1"/>
</dbReference>
<dbReference type="PROSITE" id="PS00759">
    <property type="entry name" value="ARGE_DAPE_CPG2_2"/>
    <property type="match status" value="1"/>
</dbReference>
<proteinExistence type="inferred from homology"/>
<reference key="1">
    <citation type="journal article" date="2005" name="Genome Res.">
        <title>Coping with cold: the genome of the versatile marine Antarctica bacterium Pseudoalteromonas haloplanktis TAC125.</title>
        <authorList>
            <person name="Medigue C."/>
            <person name="Krin E."/>
            <person name="Pascal G."/>
            <person name="Barbe V."/>
            <person name="Bernsel A."/>
            <person name="Bertin P.N."/>
            <person name="Cheung F."/>
            <person name="Cruveiller S."/>
            <person name="D'Amico S."/>
            <person name="Duilio A."/>
            <person name="Fang G."/>
            <person name="Feller G."/>
            <person name="Ho C."/>
            <person name="Mangenot S."/>
            <person name="Marino G."/>
            <person name="Nilsson J."/>
            <person name="Parrilli E."/>
            <person name="Rocha E.P.C."/>
            <person name="Rouy Z."/>
            <person name="Sekowska A."/>
            <person name="Tutino M.L."/>
            <person name="Vallenet D."/>
            <person name="von Heijne G."/>
            <person name="Danchin A."/>
        </authorList>
    </citation>
    <scope>NUCLEOTIDE SEQUENCE [LARGE SCALE GENOMIC DNA]</scope>
    <source>
        <strain>TAC 125</strain>
    </source>
</reference>
<organism>
    <name type="scientific">Pseudoalteromonas translucida (strain TAC 125)</name>
    <dbReference type="NCBI Taxonomy" id="326442"/>
    <lineage>
        <taxon>Bacteria</taxon>
        <taxon>Pseudomonadati</taxon>
        <taxon>Pseudomonadota</taxon>
        <taxon>Gammaproteobacteria</taxon>
        <taxon>Alteromonadales</taxon>
        <taxon>Pseudoalteromonadaceae</taxon>
        <taxon>Pseudoalteromonas</taxon>
    </lineage>
</organism>
<name>DAPE_PSET1</name>
<evidence type="ECO:0000255" key="1">
    <source>
        <dbReference type="HAMAP-Rule" id="MF_01690"/>
    </source>
</evidence>
<gene>
    <name evidence="1" type="primary">dapE</name>
    <name type="ordered locus">PSHAa1331</name>
</gene>
<accession>Q3IL20</accession>
<sequence length="376" mass="40944">MTNDVIALAQALIQRESVTPEDAGCQQMMNDRLQAVGFNIESLFFTDTLNTWARKGTQSPHFCFAGHTDVVPTGPEKNWQYPPFSGLVENGLLHGRGAADMKGSLAAMLVATERFVTKHPDHKGSISFLITSDEEGPFINGTTRVIDTLEARGEKIDMCLVGEPSSRDVLGDVVKNGRRGSLTGFLTVKGIQGHVAYPQLAQNPIHLTTPALTELSQTVWDHGNEYFPATSFQISNINGGTGAGNVIPGELEVQFNFRFSTEVTHTQLQQRVNAILQQHNLNYELSWIVNGQPFLTEHGPLVDATVKAIKSVTGLTTNLETTGGTSDGRFIAQTGAKVIELGPRNATIHKVDECVSTDDLIALCDIYEQILENLLT</sequence>